<sequence length="122" mass="13655">MADSGGSSPWWKSLTRKKSKEVTVGVQPQVRPETGQEPSPPHSDRTSSLPENQHSNILGDPGESLRSDKLCEEKTGNSRRNLKISRSGRFKEKRKMRATLLPEGDKSPEEADFPDDPQEDKQ</sequence>
<feature type="chain" id="PRO_0000271110" description="Proline-rich protein 15">
    <location>
        <begin position="1"/>
        <end position="122"/>
    </location>
</feature>
<feature type="region of interest" description="Disordered" evidence="1">
    <location>
        <begin position="1"/>
        <end position="122"/>
    </location>
</feature>
<feature type="compositionally biased region" description="Polar residues" evidence="1">
    <location>
        <begin position="46"/>
        <end position="56"/>
    </location>
</feature>
<feature type="compositionally biased region" description="Basic and acidic residues" evidence="1">
    <location>
        <begin position="63"/>
        <end position="76"/>
    </location>
</feature>
<feature type="compositionally biased region" description="Basic residues" evidence="1">
    <location>
        <begin position="80"/>
        <end position="97"/>
    </location>
</feature>
<feature type="compositionally biased region" description="Acidic residues" evidence="1">
    <location>
        <begin position="110"/>
        <end position="122"/>
    </location>
</feature>
<feature type="modified residue" description="Phosphoserine" evidence="4">
    <location>
        <position position="39"/>
    </location>
</feature>
<gene>
    <name type="primary">Prr15</name>
    <name type="synonym">G90</name>
</gene>
<accession>Q9D1T5</accession>
<organism>
    <name type="scientific">Mus musculus</name>
    <name type="common">Mouse</name>
    <dbReference type="NCBI Taxonomy" id="10090"/>
    <lineage>
        <taxon>Eukaryota</taxon>
        <taxon>Metazoa</taxon>
        <taxon>Chordata</taxon>
        <taxon>Craniata</taxon>
        <taxon>Vertebrata</taxon>
        <taxon>Euteleostomi</taxon>
        <taxon>Mammalia</taxon>
        <taxon>Eutheria</taxon>
        <taxon>Euarchontoglires</taxon>
        <taxon>Glires</taxon>
        <taxon>Rodentia</taxon>
        <taxon>Myomorpha</taxon>
        <taxon>Muroidea</taxon>
        <taxon>Muridae</taxon>
        <taxon>Murinae</taxon>
        <taxon>Mus</taxon>
        <taxon>Mus</taxon>
    </lineage>
</organism>
<comment type="function">
    <text evidence="2">May have a role in proliferation and/or differentiation.</text>
</comment>
<comment type="tissue specificity">
    <text evidence="2">Exhibits a cell type specific expression pattern only in the small and large intestine and in the testis. Along the intestinal tract expression is restricted to the non-proliferating epithelial cells surrounding the villi and no expression is found in the intestinal crypts, where proliferation occurs. In the testis, it is detected only in post-mitotic secondary spermatocytes.</text>
</comment>
<comment type="developmental stage">
    <text evidence="2">Expressed in specific structures of the developing head, namely the brain, inner and middle ear, olfactory epithelium, vomeronasal organ, nasopharynx, oropharynx, papillae of the tongue and oral cavity, pituitary gland and epiglottis.</text>
</comment>
<comment type="similarity">
    <text evidence="3">Belongs to the PRR15 family.</text>
</comment>
<name>PRR15_MOUSE</name>
<keyword id="KW-0217">Developmental protein</keyword>
<keyword id="KW-0597">Phosphoprotein</keyword>
<keyword id="KW-1185">Reference proteome</keyword>
<protein>
    <recommendedName>
        <fullName>Proline-rich protein 15</fullName>
    </recommendedName>
</protein>
<dbReference type="EMBL" id="AJ132433">
    <property type="protein sequence ID" value="CAD45579.1"/>
    <property type="molecule type" value="mRNA"/>
</dbReference>
<dbReference type="EMBL" id="AK021401">
    <property type="protein sequence ID" value="BAB32398.1"/>
    <property type="molecule type" value="mRNA"/>
</dbReference>
<dbReference type="CCDS" id="CCDS20155.1"/>
<dbReference type="RefSeq" id="NP_084300.1">
    <property type="nucleotide sequence ID" value="NM_030024.3"/>
</dbReference>
<dbReference type="RefSeq" id="XP_036008292.1">
    <property type="nucleotide sequence ID" value="XM_036152399.1"/>
</dbReference>
<dbReference type="BioGRID" id="219086">
    <property type="interactions" value="5"/>
</dbReference>
<dbReference type="FunCoup" id="Q9D1T5">
    <property type="interactions" value="40"/>
</dbReference>
<dbReference type="STRING" id="10090.ENSMUSP00000049549"/>
<dbReference type="iPTMnet" id="Q9D1T5"/>
<dbReference type="PhosphoSitePlus" id="Q9D1T5"/>
<dbReference type="jPOST" id="Q9D1T5"/>
<dbReference type="PaxDb" id="10090-ENSMUSP00000049549"/>
<dbReference type="ProteomicsDB" id="291668"/>
<dbReference type="Antibodypedia" id="44229">
    <property type="antibodies" value="105 antibodies from 15 providers"/>
</dbReference>
<dbReference type="DNASU" id="78004"/>
<dbReference type="Ensembl" id="ENSMUST00000059138.6">
    <property type="protein sequence ID" value="ENSMUSP00000049549.5"/>
    <property type="gene ID" value="ENSMUSG00000045725.6"/>
</dbReference>
<dbReference type="GeneID" id="78004"/>
<dbReference type="KEGG" id="mmu:78004"/>
<dbReference type="UCSC" id="uc009bzu.1">
    <property type="organism name" value="mouse"/>
</dbReference>
<dbReference type="AGR" id="MGI:1925254"/>
<dbReference type="CTD" id="222171"/>
<dbReference type="MGI" id="MGI:1925254">
    <property type="gene designation" value="Prr15"/>
</dbReference>
<dbReference type="VEuPathDB" id="HostDB:ENSMUSG00000045725"/>
<dbReference type="eggNOG" id="ENOG502S7ST">
    <property type="taxonomic scope" value="Eukaryota"/>
</dbReference>
<dbReference type="GeneTree" id="ENSGT00940000154534"/>
<dbReference type="HOGENOM" id="CLU_164864_0_0_1"/>
<dbReference type="InParanoid" id="Q9D1T5"/>
<dbReference type="OMA" id="EEAWKGW"/>
<dbReference type="OrthoDB" id="9924851at2759"/>
<dbReference type="PhylomeDB" id="Q9D1T5"/>
<dbReference type="TreeFam" id="TF333189"/>
<dbReference type="BioGRID-ORCS" id="78004">
    <property type="hits" value="2 hits in 76 CRISPR screens"/>
</dbReference>
<dbReference type="PRO" id="PR:Q9D1T5"/>
<dbReference type="Proteomes" id="UP000000589">
    <property type="component" value="Chromosome 6"/>
</dbReference>
<dbReference type="RNAct" id="Q9D1T5">
    <property type="molecule type" value="protein"/>
</dbReference>
<dbReference type="Bgee" id="ENSMUSG00000045725">
    <property type="expression patterns" value="Expressed in vestibular epithelium and 155 other cell types or tissues"/>
</dbReference>
<dbReference type="ExpressionAtlas" id="Q9D1T5">
    <property type="expression patterns" value="baseline and differential"/>
</dbReference>
<dbReference type="InterPro" id="IPR028237">
    <property type="entry name" value="PRR15"/>
</dbReference>
<dbReference type="PANTHER" id="PTHR14581">
    <property type="match status" value="1"/>
</dbReference>
<dbReference type="PANTHER" id="PTHR14581:SF4">
    <property type="entry name" value="PROLINE-RICH PROTEIN 15"/>
    <property type="match status" value="1"/>
</dbReference>
<dbReference type="Pfam" id="PF15321">
    <property type="entry name" value="ATAD4"/>
    <property type="match status" value="1"/>
</dbReference>
<reference key="1">
    <citation type="journal article" date="1999" name="Gene">
        <title>Identification and characterization of G90, a novel mouse RNA that lacks an extensive open reading frame.</title>
        <authorList>
            <person name="Krause R."/>
            <person name="Hemberger M."/>
            <person name="Himmelbauer H."/>
            <person name="Kalscheuer V."/>
            <person name="Fundele R.H."/>
        </authorList>
    </citation>
    <scope>NUCLEOTIDE SEQUENCE [MRNA]</scope>
    <source>
        <strain>C57BL/6J</strain>
        <tissue>Small intestine</tissue>
    </source>
</reference>
<reference key="2">
    <citation type="journal article" date="2005" name="Science">
        <title>The transcriptional landscape of the mammalian genome.</title>
        <authorList>
            <person name="Carninci P."/>
            <person name="Kasukawa T."/>
            <person name="Katayama S."/>
            <person name="Gough J."/>
            <person name="Frith M.C."/>
            <person name="Maeda N."/>
            <person name="Oyama R."/>
            <person name="Ravasi T."/>
            <person name="Lenhard B."/>
            <person name="Wells C."/>
            <person name="Kodzius R."/>
            <person name="Shimokawa K."/>
            <person name="Bajic V.B."/>
            <person name="Brenner S.E."/>
            <person name="Batalov S."/>
            <person name="Forrest A.R."/>
            <person name="Zavolan M."/>
            <person name="Davis M.J."/>
            <person name="Wilming L.G."/>
            <person name="Aidinis V."/>
            <person name="Allen J.E."/>
            <person name="Ambesi-Impiombato A."/>
            <person name="Apweiler R."/>
            <person name="Aturaliya R.N."/>
            <person name="Bailey T.L."/>
            <person name="Bansal M."/>
            <person name="Baxter L."/>
            <person name="Beisel K.W."/>
            <person name="Bersano T."/>
            <person name="Bono H."/>
            <person name="Chalk A.M."/>
            <person name="Chiu K.P."/>
            <person name="Choudhary V."/>
            <person name="Christoffels A."/>
            <person name="Clutterbuck D.R."/>
            <person name="Crowe M.L."/>
            <person name="Dalla E."/>
            <person name="Dalrymple B.P."/>
            <person name="de Bono B."/>
            <person name="Della Gatta G."/>
            <person name="di Bernardo D."/>
            <person name="Down T."/>
            <person name="Engstrom P."/>
            <person name="Fagiolini M."/>
            <person name="Faulkner G."/>
            <person name="Fletcher C.F."/>
            <person name="Fukushima T."/>
            <person name="Furuno M."/>
            <person name="Futaki S."/>
            <person name="Gariboldi M."/>
            <person name="Georgii-Hemming P."/>
            <person name="Gingeras T.R."/>
            <person name="Gojobori T."/>
            <person name="Green R.E."/>
            <person name="Gustincich S."/>
            <person name="Harbers M."/>
            <person name="Hayashi Y."/>
            <person name="Hensch T.K."/>
            <person name="Hirokawa N."/>
            <person name="Hill D."/>
            <person name="Huminiecki L."/>
            <person name="Iacono M."/>
            <person name="Ikeo K."/>
            <person name="Iwama A."/>
            <person name="Ishikawa T."/>
            <person name="Jakt M."/>
            <person name="Kanapin A."/>
            <person name="Katoh M."/>
            <person name="Kawasawa Y."/>
            <person name="Kelso J."/>
            <person name="Kitamura H."/>
            <person name="Kitano H."/>
            <person name="Kollias G."/>
            <person name="Krishnan S.P."/>
            <person name="Kruger A."/>
            <person name="Kummerfeld S.K."/>
            <person name="Kurochkin I.V."/>
            <person name="Lareau L.F."/>
            <person name="Lazarevic D."/>
            <person name="Lipovich L."/>
            <person name="Liu J."/>
            <person name="Liuni S."/>
            <person name="McWilliam S."/>
            <person name="Madan Babu M."/>
            <person name="Madera M."/>
            <person name="Marchionni L."/>
            <person name="Matsuda H."/>
            <person name="Matsuzawa S."/>
            <person name="Miki H."/>
            <person name="Mignone F."/>
            <person name="Miyake S."/>
            <person name="Morris K."/>
            <person name="Mottagui-Tabar S."/>
            <person name="Mulder N."/>
            <person name="Nakano N."/>
            <person name="Nakauchi H."/>
            <person name="Ng P."/>
            <person name="Nilsson R."/>
            <person name="Nishiguchi S."/>
            <person name="Nishikawa S."/>
            <person name="Nori F."/>
            <person name="Ohara O."/>
            <person name="Okazaki Y."/>
            <person name="Orlando V."/>
            <person name="Pang K.C."/>
            <person name="Pavan W.J."/>
            <person name="Pavesi G."/>
            <person name="Pesole G."/>
            <person name="Petrovsky N."/>
            <person name="Piazza S."/>
            <person name="Reed J."/>
            <person name="Reid J.F."/>
            <person name="Ring B.Z."/>
            <person name="Ringwald M."/>
            <person name="Rost B."/>
            <person name="Ruan Y."/>
            <person name="Salzberg S.L."/>
            <person name="Sandelin A."/>
            <person name="Schneider C."/>
            <person name="Schoenbach C."/>
            <person name="Sekiguchi K."/>
            <person name="Semple C.A."/>
            <person name="Seno S."/>
            <person name="Sessa L."/>
            <person name="Sheng Y."/>
            <person name="Shibata Y."/>
            <person name="Shimada H."/>
            <person name="Shimada K."/>
            <person name="Silva D."/>
            <person name="Sinclair B."/>
            <person name="Sperling S."/>
            <person name="Stupka E."/>
            <person name="Sugiura K."/>
            <person name="Sultana R."/>
            <person name="Takenaka Y."/>
            <person name="Taki K."/>
            <person name="Tammoja K."/>
            <person name="Tan S.L."/>
            <person name="Tang S."/>
            <person name="Taylor M.S."/>
            <person name="Tegner J."/>
            <person name="Teichmann S.A."/>
            <person name="Ueda H.R."/>
            <person name="van Nimwegen E."/>
            <person name="Verardo R."/>
            <person name="Wei C.L."/>
            <person name="Yagi K."/>
            <person name="Yamanishi H."/>
            <person name="Zabarovsky E."/>
            <person name="Zhu S."/>
            <person name="Zimmer A."/>
            <person name="Hide W."/>
            <person name="Bult C."/>
            <person name="Grimmond S.M."/>
            <person name="Teasdale R.D."/>
            <person name="Liu E.T."/>
            <person name="Brusic V."/>
            <person name="Quackenbush J."/>
            <person name="Wahlestedt C."/>
            <person name="Mattick J.S."/>
            <person name="Hume D.A."/>
            <person name="Kai C."/>
            <person name="Sasaki D."/>
            <person name="Tomaru Y."/>
            <person name="Fukuda S."/>
            <person name="Kanamori-Katayama M."/>
            <person name="Suzuki M."/>
            <person name="Aoki J."/>
            <person name="Arakawa T."/>
            <person name="Iida J."/>
            <person name="Imamura K."/>
            <person name="Itoh M."/>
            <person name="Kato T."/>
            <person name="Kawaji H."/>
            <person name="Kawagashira N."/>
            <person name="Kawashima T."/>
            <person name="Kojima M."/>
            <person name="Kondo S."/>
            <person name="Konno H."/>
            <person name="Nakano K."/>
            <person name="Ninomiya N."/>
            <person name="Nishio T."/>
            <person name="Okada M."/>
            <person name="Plessy C."/>
            <person name="Shibata K."/>
            <person name="Shiraki T."/>
            <person name="Suzuki S."/>
            <person name="Tagami M."/>
            <person name="Waki K."/>
            <person name="Watahiki A."/>
            <person name="Okamura-Oho Y."/>
            <person name="Suzuki H."/>
            <person name="Kawai J."/>
            <person name="Hayashizaki Y."/>
        </authorList>
    </citation>
    <scope>NUCLEOTIDE SEQUENCE [LARGE SCALE MRNA]</scope>
    <source>
        <strain>C57BL/6J</strain>
        <tissue>Eye</tissue>
    </source>
</reference>
<reference key="3">
    <citation type="journal article" date="2003" name="Anat. Embryol. (Berl.)">
        <title>Preferential expression of the G90 gene in post-mitotic cells during mouse embryonic development.</title>
        <authorList>
            <person name="Meunier D."/>
            <person name="Peters T."/>
            <person name="Luttges A."/>
            <person name="Curfs J."/>
            <person name="Fundele R."/>
        </authorList>
    </citation>
    <scope>FUNCTION</scope>
    <scope>TISSUE SPECIFICITY</scope>
    <scope>DEVELOPMENTAL STAGE</scope>
</reference>
<reference key="4">
    <citation type="journal article" date="2010" name="Cell">
        <title>A tissue-specific atlas of mouse protein phosphorylation and expression.</title>
        <authorList>
            <person name="Huttlin E.L."/>
            <person name="Jedrychowski M.P."/>
            <person name="Elias J.E."/>
            <person name="Goswami T."/>
            <person name="Rad R."/>
            <person name="Beausoleil S.A."/>
            <person name="Villen J."/>
            <person name="Haas W."/>
            <person name="Sowa M.E."/>
            <person name="Gygi S.P."/>
        </authorList>
    </citation>
    <scope>PHOSPHORYLATION [LARGE SCALE ANALYSIS] AT SER-39</scope>
    <scope>IDENTIFICATION BY MASS SPECTROMETRY [LARGE SCALE ANALYSIS]</scope>
    <source>
        <tissue>Kidney</tissue>
        <tissue>Testis</tissue>
    </source>
</reference>
<proteinExistence type="evidence at protein level"/>
<evidence type="ECO:0000256" key="1">
    <source>
        <dbReference type="SAM" id="MobiDB-lite"/>
    </source>
</evidence>
<evidence type="ECO:0000269" key="2">
    <source>
    </source>
</evidence>
<evidence type="ECO:0000305" key="3"/>
<evidence type="ECO:0007744" key="4">
    <source>
    </source>
</evidence>